<accession>A7MUL2</accession>
<organism>
    <name type="scientific">Vibrio campbellii (strain ATCC BAA-1116)</name>
    <dbReference type="NCBI Taxonomy" id="2902295"/>
    <lineage>
        <taxon>Bacteria</taxon>
        <taxon>Pseudomonadati</taxon>
        <taxon>Pseudomonadota</taxon>
        <taxon>Gammaproteobacteria</taxon>
        <taxon>Vibrionales</taxon>
        <taxon>Vibrionaceae</taxon>
        <taxon>Vibrio</taxon>
    </lineage>
</organism>
<dbReference type="EC" id="3.1.13.-" evidence="1"/>
<dbReference type="EMBL" id="CP000789">
    <property type="protein sequence ID" value="ABU71942.1"/>
    <property type="molecule type" value="Genomic_DNA"/>
</dbReference>
<dbReference type="RefSeq" id="WP_005439693.1">
    <property type="nucleotide sequence ID" value="NC_022269.1"/>
</dbReference>
<dbReference type="SMR" id="A7MUL2"/>
<dbReference type="GeneID" id="47100814"/>
<dbReference type="KEGG" id="vha:VIBHAR_02991"/>
<dbReference type="PATRIC" id="fig|338187.25.peg.3197"/>
<dbReference type="Proteomes" id="UP000008152">
    <property type="component" value="Chromosome I"/>
</dbReference>
<dbReference type="GO" id="GO:0005829">
    <property type="term" value="C:cytosol"/>
    <property type="evidence" value="ECO:0007669"/>
    <property type="project" value="TreeGrafter"/>
</dbReference>
<dbReference type="GO" id="GO:0008408">
    <property type="term" value="F:3'-5' exonuclease activity"/>
    <property type="evidence" value="ECO:0007669"/>
    <property type="project" value="TreeGrafter"/>
</dbReference>
<dbReference type="GO" id="GO:0000287">
    <property type="term" value="F:magnesium ion binding"/>
    <property type="evidence" value="ECO:0007669"/>
    <property type="project" value="UniProtKB-UniRule"/>
</dbReference>
<dbReference type="GO" id="GO:0003676">
    <property type="term" value="F:nucleic acid binding"/>
    <property type="evidence" value="ECO:0007669"/>
    <property type="project" value="InterPro"/>
</dbReference>
<dbReference type="GO" id="GO:0016896">
    <property type="term" value="F:RNA exonuclease activity, producing 5'-phosphomonoesters"/>
    <property type="evidence" value="ECO:0007669"/>
    <property type="project" value="UniProtKB-UniRule"/>
</dbReference>
<dbReference type="GO" id="GO:0045004">
    <property type="term" value="P:DNA replication proofreading"/>
    <property type="evidence" value="ECO:0007669"/>
    <property type="project" value="TreeGrafter"/>
</dbReference>
<dbReference type="GO" id="GO:0008033">
    <property type="term" value="P:tRNA processing"/>
    <property type="evidence" value="ECO:0007669"/>
    <property type="project" value="UniProtKB-KW"/>
</dbReference>
<dbReference type="CDD" id="cd06134">
    <property type="entry name" value="RNaseT"/>
    <property type="match status" value="1"/>
</dbReference>
<dbReference type="FunFam" id="3.30.420.10:FF:000009">
    <property type="entry name" value="Ribonuclease T"/>
    <property type="match status" value="1"/>
</dbReference>
<dbReference type="Gene3D" id="3.30.420.10">
    <property type="entry name" value="Ribonuclease H-like superfamily/Ribonuclease H"/>
    <property type="match status" value="1"/>
</dbReference>
<dbReference type="HAMAP" id="MF_00157">
    <property type="entry name" value="RNase_T"/>
    <property type="match status" value="1"/>
</dbReference>
<dbReference type="InterPro" id="IPR013520">
    <property type="entry name" value="Exonuclease_RNaseT/DNA_pol3"/>
</dbReference>
<dbReference type="InterPro" id="IPR005987">
    <property type="entry name" value="RNase_T"/>
</dbReference>
<dbReference type="InterPro" id="IPR012337">
    <property type="entry name" value="RNaseH-like_sf"/>
</dbReference>
<dbReference type="InterPro" id="IPR036397">
    <property type="entry name" value="RNaseH_sf"/>
</dbReference>
<dbReference type="NCBIfam" id="TIGR01298">
    <property type="entry name" value="RNaseT"/>
    <property type="match status" value="1"/>
</dbReference>
<dbReference type="PANTHER" id="PTHR30231">
    <property type="entry name" value="DNA POLYMERASE III SUBUNIT EPSILON"/>
    <property type="match status" value="1"/>
</dbReference>
<dbReference type="PANTHER" id="PTHR30231:SF2">
    <property type="entry name" value="RIBONUCLEASE T"/>
    <property type="match status" value="1"/>
</dbReference>
<dbReference type="Pfam" id="PF00929">
    <property type="entry name" value="RNase_T"/>
    <property type="match status" value="1"/>
</dbReference>
<dbReference type="SMART" id="SM00479">
    <property type="entry name" value="EXOIII"/>
    <property type="match status" value="1"/>
</dbReference>
<dbReference type="SUPFAM" id="SSF53098">
    <property type="entry name" value="Ribonuclease H-like"/>
    <property type="match status" value="1"/>
</dbReference>
<name>RNT_VIBC1</name>
<keyword id="KW-0269">Exonuclease</keyword>
<keyword id="KW-0378">Hydrolase</keyword>
<keyword id="KW-0460">Magnesium</keyword>
<keyword id="KW-0479">Metal-binding</keyword>
<keyword id="KW-0540">Nuclease</keyword>
<keyword id="KW-0819">tRNA processing</keyword>
<proteinExistence type="inferred from homology"/>
<sequence>MTIENEALTLKKRFRGYFPVVVDVETAGFNAQTDALLEICAVTLSMDENGDLHPASTIHFHIEPFEGANLEKEALEFNGIRDPFSPLRGAVSEQEALKEIYKLIRKEQKAADCSRAIMVAHNAAFDLSFVNAANERCKLKRVPFHPFATFDTATLSGLAYGQTVLAKACKAAGMEFDNREAHSALYDTQQTAELFCGIVNKWKALGGWPLVDEE</sequence>
<comment type="function">
    <text evidence="1">Trims short 3' overhangs of a variety of RNA species, leaving a one or two nucleotide 3' overhang. Responsible for the end-turnover of tRNA: specifically removes the terminal AMP residue from uncharged tRNA (tRNA-C-C-A). Also appears to be involved in tRNA biosynthesis.</text>
</comment>
<comment type="cofactor">
    <cofactor evidence="1">
        <name>Mg(2+)</name>
        <dbReference type="ChEBI" id="CHEBI:18420"/>
    </cofactor>
    <text evidence="1">Binds two Mg(2+) per subunit. The active form of the enzyme binds two Mg(2+) ions in its active site. The first Mg(2+) forms only one salt bridge with the protein.</text>
</comment>
<comment type="subunit">
    <text evidence="1">Homodimer.</text>
</comment>
<comment type="similarity">
    <text evidence="1">Belongs to the RNase T family.</text>
</comment>
<protein>
    <recommendedName>
        <fullName evidence="1">Ribonuclease T</fullName>
        <ecNumber evidence="1">3.1.13.-</ecNumber>
    </recommendedName>
    <alternativeName>
        <fullName evidence="1">Exoribonuclease T</fullName>
        <shortName evidence="1">RNase T</shortName>
    </alternativeName>
</protein>
<feature type="chain" id="PRO_1000011425" description="Ribonuclease T">
    <location>
        <begin position="1"/>
        <end position="214"/>
    </location>
</feature>
<feature type="domain" description="Exonuclease" evidence="1">
    <location>
        <begin position="20"/>
        <end position="195"/>
    </location>
</feature>
<feature type="active site" description="Proton donor/acceptor" evidence="1">
    <location>
        <position position="182"/>
    </location>
</feature>
<feature type="binding site" evidence="1">
    <location>
        <position position="23"/>
    </location>
    <ligand>
        <name>Mg(2+)</name>
        <dbReference type="ChEBI" id="CHEBI:18420"/>
        <label>1</label>
        <note>catalytic</note>
    </ligand>
</feature>
<feature type="binding site" evidence="1">
    <location>
        <position position="23"/>
    </location>
    <ligand>
        <name>Mg(2+)</name>
        <dbReference type="ChEBI" id="CHEBI:18420"/>
        <label>2</label>
        <note>catalytic</note>
    </ligand>
</feature>
<feature type="binding site" evidence="1">
    <location>
        <position position="25"/>
    </location>
    <ligand>
        <name>Mg(2+)</name>
        <dbReference type="ChEBI" id="CHEBI:18420"/>
        <label>2</label>
        <note>catalytic</note>
    </ligand>
</feature>
<feature type="binding site" evidence="1">
    <location>
        <position position="182"/>
    </location>
    <ligand>
        <name>Mg(2+)</name>
        <dbReference type="ChEBI" id="CHEBI:18420"/>
        <label>2</label>
        <note>catalytic</note>
    </ligand>
</feature>
<feature type="binding site" evidence="1">
    <location>
        <position position="187"/>
    </location>
    <ligand>
        <name>Mg(2+)</name>
        <dbReference type="ChEBI" id="CHEBI:18420"/>
        <label>2</label>
        <note>catalytic</note>
    </ligand>
</feature>
<feature type="site" description="Important for substrate binding and specificity" evidence="1">
    <location>
        <position position="29"/>
    </location>
</feature>
<feature type="site" description="Important for substrate binding and specificity" evidence="1">
    <location>
        <position position="77"/>
    </location>
</feature>
<feature type="site" description="Important for substrate binding and specificity" evidence="1">
    <location>
        <position position="125"/>
    </location>
</feature>
<feature type="site" description="Important for substrate binding and specificity" evidence="1">
    <location>
        <position position="147"/>
    </location>
</feature>
<reference key="1">
    <citation type="submission" date="2007-08" db="EMBL/GenBank/DDBJ databases">
        <authorList>
            <consortium name="The Vibrio harveyi Genome Sequencing Project"/>
            <person name="Bassler B."/>
            <person name="Clifton S.W."/>
            <person name="Fulton L."/>
            <person name="Delehaunty K."/>
            <person name="Fronick C."/>
            <person name="Harrison M."/>
            <person name="Markivic C."/>
            <person name="Fulton R."/>
            <person name="Tin-Wollam A.-M."/>
            <person name="Shah N."/>
            <person name="Pepin K."/>
            <person name="Nash W."/>
            <person name="Thiruvilangam P."/>
            <person name="Bhonagiri V."/>
            <person name="Waters C."/>
            <person name="Tu K.C."/>
            <person name="Irgon J."/>
            <person name="Wilson R.K."/>
        </authorList>
    </citation>
    <scope>NUCLEOTIDE SEQUENCE [LARGE SCALE GENOMIC DNA]</scope>
    <source>
        <strain>ATCC BAA-1116 / BB120</strain>
    </source>
</reference>
<evidence type="ECO:0000255" key="1">
    <source>
        <dbReference type="HAMAP-Rule" id="MF_00157"/>
    </source>
</evidence>
<gene>
    <name evidence="1" type="primary">rnt</name>
    <name type="ordered locus">VIBHAR_02991</name>
</gene>